<name>Y905_MYCBO</name>
<protein>
    <recommendedName>
        <fullName>Uncharacterized tRNA/rRNA methyltransferase Mb0905</fullName>
        <ecNumber>2.1.1.-</ecNumber>
    </recommendedName>
</protein>
<proteinExistence type="inferred from homology"/>
<feature type="chain" id="PRO_0000159837" description="Uncharacterized tRNA/rRNA methyltransferase Mb0905">
    <location>
        <begin position="1"/>
        <end position="288"/>
    </location>
</feature>
<feature type="region of interest" description="Disordered" evidence="1">
    <location>
        <begin position="1"/>
        <end position="20"/>
    </location>
</feature>
<feature type="compositionally biased region" description="Basic and acidic residues" evidence="1">
    <location>
        <begin position="1"/>
        <end position="12"/>
    </location>
</feature>
<comment type="similarity">
    <text evidence="2">Belongs to the class IV-like SAM-binding methyltransferase superfamily. RNA methyltransferase TrmH family.</text>
</comment>
<dbReference type="EC" id="2.1.1.-"/>
<dbReference type="EMBL" id="LT708304">
    <property type="protein sequence ID" value="SIT99503.1"/>
    <property type="molecule type" value="Genomic_DNA"/>
</dbReference>
<dbReference type="RefSeq" id="NP_854562.1">
    <property type="nucleotide sequence ID" value="NC_002945.3"/>
</dbReference>
<dbReference type="RefSeq" id="WP_003404610.1">
    <property type="nucleotide sequence ID" value="NC_002945.4"/>
</dbReference>
<dbReference type="SMR" id="P59968"/>
<dbReference type="KEGG" id="mbo:BQ2027_MB0905"/>
<dbReference type="PATRIC" id="fig|233413.5.peg.985"/>
<dbReference type="Proteomes" id="UP000001419">
    <property type="component" value="Chromosome"/>
</dbReference>
<dbReference type="GO" id="GO:0003723">
    <property type="term" value="F:RNA binding"/>
    <property type="evidence" value="ECO:0007669"/>
    <property type="project" value="InterPro"/>
</dbReference>
<dbReference type="GO" id="GO:0008173">
    <property type="term" value="F:RNA methyltransferase activity"/>
    <property type="evidence" value="ECO:0007669"/>
    <property type="project" value="InterPro"/>
</dbReference>
<dbReference type="GO" id="GO:0032259">
    <property type="term" value="P:methylation"/>
    <property type="evidence" value="ECO:0007669"/>
    <property type="project" value="UniProtKB-KW"/>
</dbReference>
<dbReference type="GO" id="GO:0006396">
    <property type="term" value="P:RNA processing"/>
    <property type="evidence" value="ECO:0007669"/>
    <property type="project" value="InterPro"/>
</dbReference>
<dbReference type="CDD" id="cd18095">
    <property type="entry name" value="SpoU-like_rRNA-MTase"/>
    <property type="match status" value="1"/>
</dbReference>
<dbReference type="Gene3D" id="3.40.1280.10">
    <property type="match status" value="1"/>
</dbReference>
<dbReference type="InterPro" id="IPR029028">
    <property type="entry name" value="Alpha/beta_knot_MTases"/>
</dbReference>
<dbReference type="InterPro" id="IPR029064">
    <property type="entry name" value="Ribosomal_eL30-like_sf"/>
</dbReference>
<dbReference type="InterPro" id="IPR051259">
    <property type="entry name" value="rRNA_Methyltransferase"/>
</dbReference>
<dbReference type="InterPro" id="IPR001537">
    <property type="entry name" value="SpoU_MeTrfase"/>
</dbReference>
<dbReference type="InterPro" id="IPR029026">
    <property type="entry name" value="tRNA_m1G_MTases_N"/>
</dbReference>
<dbReference type="PANTHER" id="PTHR43191:SF12">
    <property type="entry name" value="RRNA METHYLASE"/>
    <property type="match status" value="1"/>
</dbReference>
<dbReference type="PANTHER" id="PTHR43191">
    <property type="entry name" value="RRNA METHYLTRANSFERASE 3"/>
    <property type="match status" value="1"/>
</dbReference>
<dbReference type="Pfam" id="PF00588">
    <property type="entry name" value="SpoU_methylase"/>
    <property type="match status" value="1"/>
</dbReference>
<dbReference type="SUPFAM" id="SSF75217">
    <property type="entry name" value="alpha/beta knot"/>
    <property type="match status" value="1"/>
</dbReference>
<dbReference type="SUPFAM" id="SSF55315">
    <property type="entry name" value="L30e-like"/>
    <property type="match status" value="1"/>
</dbReference>
<sequence>MTEGRCAQHPDGLDVQDVCDPDDPRLDDFRDLNSIDRRPDLPTGKALVIAEGVLVVQRMLASRFTPLALFGTDRRLAELKDDLAGVGAPYYRASADVMARVIGFHLNRGVLAAARRVPEPSVAQVVAGARTVAVLEGVNDHENLGSIFRNAAGLSVDAVVFGTGCADPLYRRAVRVSMGHALLVPYARAADWPTELMTLKESGFRLLAMTPHGNACKLPEAIAAVSHERIALLVGAEGPGLTAAALRISDVRVRIPMSRGTDSLNVATAAALAFYERTRSGHHIGPGT</sequence>
<keyword id="KW-0489">Methyltransferase</keyword>
<keyword id="KW-1185">Reference proteome</keyword>
<keyword id="KW-0808">Transferase</keyword>
<gene>
    <name type="ordered locus">BQ2027_MB0905</name>
</gene>
<evidence type="ECO:0000256" key="1">
    <source>
        <dbReference type="SAM" id="MobiDB-lite"/>
    </source>
</evidence>
<evidence type="ECO:0000305" key="2"/>
<reference key="1">
    <citation type="journal article" date="2003" name="Proc. Natl. Acad. Sci. U.S.A.">
        <title>The complete genome sequence of Mycobacterium bovis.</title>
        <authorList>
            <person name="Garnier T."/>
            <person name="Eiglmeier K."/>
            <person name="Camus J.-C."/>
            <person name="Medina N."/>
            <person name="Mansoor H."/>
            <person name="Pryor M."/>
            <person name="Duthoy S."/>
            <person name="Grondin S."/>
            <person name="Lacroix C."/>
            <person name="Monsempe C."/>
            <person name="Simon S."/>
            <person name="Harris B."/>
            <person name="Atkin R."/>
            <person name="Doggett J."/>
            <person name="Mayes R."/>
            <person name="Keating L."/>
            <person name="Wheeler P.R."/>
            <person name="Parkhill J."/>
            <person name="Barrell B.G."/>
            <person name="Cole S.T."/>
            <person name="Gordon S.V."/>
            <person name="Hewinson R.G."/>
        </authorList>
    </citation>
    <scope>NUCLEOTIDE SEQUENCE [LARGE SCALE GENOMIC DNA]</scope>
    <source>
        <strain>ATCC BAA-935 / AF2122/97</strain>
    </source>
</reference>
<reference key="2">
    <citation type="journal article" date="2017" name="Genome Announc.">
        <title>Updated reference genome sequence and annotation of Mycobacterium bovis AF2122/97.</title>
        <authorList>
            <person name="Malone K.M."/>
            <person name="Farrell D."/>
            <person name="Stuber T.P."/>
            <person name="Schubert O.T."/>
            <person name="Aebersold R."/>
            <person name="Robbe-Austerman S."/>
            <person name="Gordon S.V."/>
        </authorList>
    </citation>
    <scope>NUCLEOTIDE SEQUENCE [LARGE SCALE GENOMIC DNA]</scope>
    <scope>GENOME REANNOTATION</scope>
    <source>
        <strain>ATCC BAA-935 / AF2122/97</strain>
    </source>
</reference>
<organism>
    <name type="scientific">Mycobacterium bovis (strain ATCC BAA-935 / AF2122/97)</name>
    <dbReference type="NCBI Taxonomy" id="233413"/>
    <lineage>
        <taxon>Bacteria</taxon>
        <taxon>Bacillati</taxon>
        <taxon>Actinomycetota</taxon>
        <taxon>Actinomycetes</taxon>
        <taxon>Mycobacteriales</taxon>
        <taxon>Mycobacteriaceae</taxon>
        <taxon>Mycobacterium</taxon>
        <taxon>Mycobacterium tuberculosis complex</taxon>
    </lineage>
</organism>
<accession>P59968</accession>
<accession>A0A1R3XXN9</accession>
<accession>X2BGE2</accession>